<organism>
    <name type="scientific">Arabidopsis thaliana</name>
    <name type="common">Mouse-ear cress</name>
    <dbReference type="NCBI Taxonomy" id="3702"/>
    <lineage>
        <taxon>Eukaryota</taxon>
        <taxon>Viridiplantae</taxon>
        <taxon>Streptophyta</taxon>
        <taxon>Embryophyta</taxon>
        <taxon>Tracheophyta</taxon>
        <taxon>Spermatophyta</taxon>
        <taxon>Magnoliopsida</taxon>
        <taxon>eudicotyledons</taxon>
        <taxon>Gunneridae</taxon>
        <taxon>Pentapetalae</taxon>
        <taxon>rosids</taxon>
        <taxon>malvids</taxon>
        <taxon>Brassicales</taxon>
        <taxon>Brassicaceae</taxon>
        <taxon>Camelineae</taxon>
        <taxon>Arabidopsis</taxon>
    </lineage>
</organism>
<comment type="function">
    <molecule>GLV5p</molecule>
    <text evidence="3 6 7 8">Signaling peptide (root growth factor) that maintains the postembryonic root stem cell niche in a PIN2-traffic dependent manner (PubMed:20798316, PubMed:23370719). Root growth factor that regulates the pattern of root growth and lateral root development by modulating the length and the number of cortical cells in the root apical meristem (RAM), and the anticlinal asymmetric cell divisions in lateral root initiation cells (By similarity). Influences the longitudinal growth rate in the primary root in response to phosphate ion (Pi)-deprivation (PubMed:25856240).</text>
</comment>
<comment type="subunit">
    <molecule>GLV5p</molecule>
    <text evidence="9">Binds to LRR receptor-like serine/threonine-protein kinases RGI1, RGI2 and RGI3 to trigger their dimerization with SERK proteins and subsequent signaling.</text>
</comment>
<comment type="subcellular location">
    <molecule>GLV5p</molecule>
    <subcellularLocation>
        <location evidence="2">Secreted</location>
    </subcellularLocation>
</comment>
<comment type="tissue specificity">
    <text evidence="6 7">Expressed in root tips.</text>
</comment>
<comment type="developmental stage">
    <text evidence="6 7">In roots, expressed only in the quiescent center (QC), the columella stem cells (CC) and the innermost layer of central columella cells; mostly present in the second, third and fourth CC layers, at a lower level in undifferentiated CCs, but not, or only marginally, in the QC (PubMed:20798316, PubMed:23370719). Induced early during lateral root formation (PubMed:23370719).</text>
</comment>
<comment type="induction">
    <text evidence="8">Accumulates in both root epidermis and cortex after Pi- deprivation.</text>
</comment>
<comment type="disruption phenotype">
    <text evidence="6 7 8">No visible phenotype, due to the redundancy with other RGF genes (PubMed:20798316, PubMed:23370719). Slower root growth after (Pi)-deprivation (PubMed:25856240). Triple mutant rgf1-rgf2-rgf3 shows a decreased meristematic cell number resulting in a short root phenotype associated with an altered PIN2 traffic (PubMed:20798316, PubMed:23370719).</text>
</comment>
<comment type="miscellaneous">
    <text evidence="14">'Golven' means irregular waves in Dutch.</text>
</comment>
<comment type="similarity">
    <text evidence="13">Belongs to the RGF family.</text>
</comment>
<comment type="sequence caution" evidence="13">
    <conflict type="erroneous gene model prediction">
        <sequence resource="EMBL-CDS" id="AAF81288"/>
    </conflict>
</comment>
<reference key="1">
    <citation type="journal article" date="2000" name="Nature">
        <title>Sequence and analysis of chromosome 1 of the plant Arabidopsis thaliana.</title>
        <authorList>
            <person name="Theologis A."/>
            <person name="Ecker J.R."/>
            <person name="Palm C.J."/>
            <person name="Federspiel N.A."/>
            <person name="Kaul S."/>
            <person name="White O."/>
            <person name="Alonso J."/>
            <person name="Altafi H."/>
            <person name="Araujo R."/>
            <person name="Bowman C.L."/>
            <person name="Brooks S.Y."/>
            <person name="Buehler E."/>
            <person name="Chan A."/>
            <person name="Chao Q."/>
            <person name="Chen H."/>
            <person name="Cheuk R.F."/>
            <person name="Chin C.W."/>
            <person name="Chung M.K."/>
            <person name="Conn L."/>
            <person name="Conway A.B."/>
            <person name="Conway A.R."/>
            <person name="Creasy T.H."/>
            <person name="Dewar K."/>
            <person name="Dunn P."/>
            <person name="Etgu P."/>
            <person name="Feldblyum T.V."/>
            <person name="Feng J.-D."/>
            <person name="Fong B."/>
            <person name="Fujii C.Y."/>
            <person name="Gill J.E."/>
            <person name="Goldsmith A.D."/>
            <person name="Haas B."/>
            <person name="Hansen N.F."/>
            <person name="Hughes B."/>
            <person name="Huizar L."/>
            <person name="Hunter J.L."/>
            <person name="Jenkins J."/>
            <person name="Johnson-Hopson C."/>
            <person name="Khan S."/>
            <person name="Khaykin E."/>
            <person name="Kim C.J."/>
            <person name="Koo H.L."/>
            <person name="Kremenetskaia I."/>
            <person name="Kurtz D.B."/>
            <person name="Kwan A."/>
            <person name="Lam B."/>
            <person name="Langin-Hooper S."/>
            <person name="Lee A."/>
            <person name="Lee J.M."/>
            <person name="Lenz C.A."/>
            <person name="Li J.H."/>
            <person name="Li Y.-P."/>
            <person name="Lin X."/>
            <person name="Liu S.X."/>
            <person name="Liu Z.A."/>
            <person name="Luros J.S."/>
            <person name="Maiti R."/>
            <person name="Marziali A."/>
            <person name="Militscher J."/>
            <person name="Miranda M."/>
            <person name="Nguyen M."/>
            <person name="Nierman W.C."/>
            <person name="Osborne B.I."/>
            <person name="Pai G."/>
            <person name="Peterson J."/>
            <person name="Pham P.K."/>
            <person name="Rizzo M."/>
            <person name="Rooney T."/>
            <person name="Rowley D."/>
            <person name="Sakano H."/>
            <person name="Salzberg S.L."/>
            <person name="Schwartz J.R."/>
            <person name="Shinn P."/>
            <person name="Southwick A.M."/>
            <person name="Sun H."/>
            <person name="Tallon L.J."/>
            <person name="Tambunga G."/>
            <person name="Toriumi M.J."/>
            <person name="Town C.D."/>
            <person name="Utterback T."/>
            <person name="Van Aken S."/>
            <person name="Vaysberg M."/>
            <person name="Vysotskaia V.S."/>
            <person name="Walker M."/>
            <person name="Wu D."/>
            <person name="Yu G."/>
            <person name="Fraser C.M."/>
            <person name="Venter J.C."/>
            <person name="Davis R.W."/>
        </authorList>
    </citation>
    <scope>NUCLEOTIDE SEQUENCE [LARGE SCALE GENOMIC DNA]</scope>
    <source>
        <strain>cv. Columbia</strain>
    </source>
</reference>
<reference key="2">
    <citation type="journal article" date="2017" name="Plant J.">
        <title>Araport11: a complete reannotation of the Arabidopsis thaliana reference genome.</title>
        <authorList>
            <person name="Cheng C.Y."/>
            <person name="Krishnakumar V."/>
            <person name="Chan A.P."/>
            <person name="Thibaud-Nissen F."/>
            <person name="Schobel S."/>
            <person name="Town C.D."/>
        </authorList>
    </citation>
    <scope>GENOME REANNOTATION</scope>
    <source>
        <strain>cv. Columbia</strain>
    </source>
</reference>
<reference key="3">
    <citation type="submission" date="2005-05" db="EMBL/GenBank/DDBJ databases">
        <authorList>
            <person name="Underwood B.A."/>
            <person name="Xiao Y.-L."/>
            <person name="Moskal W.A. Jr."/>
            <person name="Monaghan E.L."/>
            <person name="Wang W."/>
            <person name="Redman J.C."/>
            <person name="Wu H.C."/>
            <person name="Utterback T."/>
            <person name="Town C.D."/>
        </authorList>
    </citation>
    <scope>NUCLEOTIDE SEQUENCE [LARGE SCALE MRNA]</scope>
    <source>
        <strain>cv. Columbia</strain>
    </source>
</reference>
<reference key="4">
    <citation type="journal article" date="2010" name="Science">
        <title>Secreted peptide signals required for maintenance of root stem cell niche in Arabidopsis.</title>
        <authorList>
            <person name="Matsuzaki Y."/>
            <person name="Ogawa-Ohnishi M."/>
            <person name="Mori A."/>
            <person name="Matsubayashi Y."/>
        </authorList>
    </citation>
    <scope>FUNCTION</scope>
    <scope>TISSUE SPECIFICITY</scope>
    <scope>DEVELOPMENTAL STAGE</scope>
    <scope>DISRUPTION PHENOTYPE</scope>
    <scope>GENE FAMILY</scope>
    <scope>NOMENCLATURE</scope>
</reference>
<reference key="5">
    <citation type="journal article" date="2012" name="Proc. Natl. Acad. Sci. U.S.A.">
        <title>CLE-like (CLEL) peptides control the pattern of root growth and lateral root development in Arabidopsis.</title>
        <authorList>
            <person name="Meng L."/>
            <person name="Buchanan B.B."/>
            <person name="Feldman L.J."/>
            <person name="Luan S."/>
        </authorList>
    </citation>
    <scope>NOMENCLATURE</scope>
    <scope>GENE FAMILY</scope>
    <source>
        <strain>cv. Columbia</strain>
    </source>
</reference>
<reference key="6">
    <citation type="journal article" date="2013" name="Plant Physiol.">
        <title>Transcriptional and functional classification of the GOLVEN/ROOT GROWTH FACTOR/CLE-like signaling peptides reveals their role in lateral root and hair formation.</title>
        <authorList>
            <person name="Fernandez A."/>
            <person name="Drozdzecki A."/>
            <person name="Hoogewijs K."/>
            <person name="Nguyen A."/>
            <person name="Beeckman T."/>
            <person name="Madder A."/>
            <person name="Hilson P."/>
        </authorList>
    </citation>
    <scope>FUNCTION</scope>
    <scope>DISRUPTION PHENOTYPE</scope>
    <scope>TISSUE SPECIFICITY</scope>
    <scope>DEVELOPMENTAL STAGE</scope>
    <source>
        <strain>cv. Columbia</strain>
    </source>
</reference>
<reference key="7">
    <citation type="journal article" date="2015" name="New Phytol.">
        <title>Distinct sensitivities to phosphate deprivation suggest that RGF peptides play disparate roles in Arabidopsis thaliana root development.</title>
        <authorList>
            <person name="Cederholm H.M."/>
            <person name="Benfey P.N."/>
        </authorList>
    </citation>
    <scope>FUNCTION</scope>
    <scope>DISRUPTION PHENOTYPE</scope>
    <scope>INDUCTION BY PHOSPHATE-DEPRIVATION</scope>
    <source>
        <strain>cv. Columbia</strain>
    </source>
</reference>
<reference key="8">
    <citation type="journal article" date="2016" name="Proc. Natl. Acad. Sci. U.S.A.">
        <title>Identification of three LRR-RKs involved in perception of root meristem growth factor in Arabidopsis.</title>
        <authorList>
            <person name="Shinohara H."/>
            <person name="Mori A."/>
            <person name="Yasue N."/>
            <person name="Sumida K."/>
            <person name="Matsubayashi Y."/>
        </authorList>
    </citation>
    <scope>INTERACTION WITH RGI1; RGI2 AND RGI3</scope>
    <source>
        <strain>cv. Columbia</strain>
    </source>
</reference>
<reference key="9">
    <citation type="submission" date="2016-02" db="PDB data bank">
        <title>Plant Receptor.</title>
        <authorList>
            <person name="Song W."/>
            <person name="Han Z."/>
            <person name="Chai J."/>
        </authorList>
    </citation>
    <scope>X-RAY CRYSTALLOGRAPHY (2.56 ANGSTROMS) OF 97-109</scope>
</reference>
<accession>Q6DSU1</accession>
<accession>Q4PT32</accession>
<accession>Q9LMY6</accession>
<proteinExistence type="evidence at protein level"/>
<protein>
    <recommendedName>
        <fullName evidence="12">Protein GOLVEN 5</fullName>
    </recommendedName>
    <alternativeName>
        <fullName evidence="11">CLAVATA3/ESR (CLE)-related protein CLEL1</fullName>
        <shortName evidence="11">CLE-Like protein 1</shortName>
    </alternativeName>
    <alternativeName>
        <fullName evidence="10">Root meristem growth factor 2</fullName>
        <shortName evidence="10">AtRGF2</shortName>
    </alternativeName>
    <component>
        <recommendedName>
            <fullName evidence="12">GLV5p</fullName>
        </recommendedName>
    </component>
</protein>
<feature type="signal peptide" evidence="4">
    <location>
        <begin position="1"/>
        <end position="24"/>
    </location>
</feature>
<feature type="propeptide" id="PRO_0000401440" evidence="2">
    <location>
        <begin position="25"/>
        <end position="96"/>
    </location>
</feature>
<feature type="peptide" id="PRO_0000401441" description="GLV5p">
    <location>
        <begin position="97"/>
        <end position="109"/>
    </location>
</feature>
<feature type="region of interest" description="Disordered" evidence="5">
    <location>
        <begin position="54"/>
        <end position="88"/>
    </location>
</feature>
<feature type="modified residue" description="Sulfotyrosine" evidence="2">
    <location>
        <position position="98"/>
    </location>
</feature>
<feature type="modified residue" description="Hydroxyproline" evidence="1">
    <location>
        <position position="106"/>
    </location>
</feature>
<feature type="sequence conflict" description="In Ref. 3; AAY78611." evidence="13" ref="3">
    <original>ITS</original>
    <variation>VTA</variation>
    <location>
        <begin position="4"/>
        <end position="6"/>
    </location>
</feature>
<feature type="sequence conflict" description="In Ref. 3; AAY78611." evidence="13" ref="3">
    <original>N</original>
    <variation>T</variation>
    <location>
        <position position="109"/>
    </location>
</feature>
<keyword id="KW-0002">3D-structure</keyword>
<keyword id="KW-0221">Differentiation</keyword>
<keyword id="KW-0339">Growth factor</keyword>
<keyword id="KW-0379">Hydroxylation</keyword>
<keyword id="KW-1185">Reference proteome</keyword>
<keyword id="KW-0964">Secreted</keyword>
<keyword id="KW-0732">Signal</keyword>
<keyword id="KW-0765">Sulfation</keyword>
<sequence>MTNITSSFLCLLILLLFCLSFGYSLHGDKDEVLSVDVGSNAKVMKHLDGDDAMKKAQVRGRSGQEFSKETTKMMMKKTTKKETNVEEEDDLVAYTADYWKPRHHPPKNN</sequence>
<dbReference type="EMBL" id="AC027656">
    <property type="protein sequence ID" value="AAF81288.1"/>
    <property type="status" value="ALT_SEQ"/>
    <property type="molecule type" value="Genomic_DNA"/>
</dbReference>
<dbReference type="EMBL" id="CP002684">
    <property type="protein sequence ID" value="AEE29048.1"/>
    <property type="molecule type" value="Genomic_DNA"/>
</dbReference>
<dbReference type="EMBL" id="AY648307">
    <property type="protein sequence ID" value="AAT68718.1"/>
    <property type="molecule type" value="mRNA"/>
</dbReference>
<dbReference type="EMBL" id="DQ056454">
    <property type="protein sequence ID" value="AAY78611.1"/>
    <property type="molecule type" value="mRNA"/>
</dbReference>
<dbReference type="PIR" id="C86269">
    <property type="entry name" value="C86269"/>
</dbReference>
<dbReference type="RefSeq" id="NP_172819.2">
    <property type="nucleotide sequence ID" value="NM_101232.3"/>
</dbReference>
<dbReference type="PDB" id="5HZ0">
    <property type="method" value="X-ray"/>
    <property type="resolution" value="2.56 A"/>
    <property type="chains" value="A=97-109"/>
</dbReference>
<dbReference type="PDBsum" id="5HZ0"/>
<dbReference type="SMR" id="Q6DSU1"/>
<dbReference type="STRING" id="3702.Q6DSU1"/>
<dbReference type="PaxDb" id="3702-AT1G13620.1"/>
<dbReference type="EnsemblPlants" id="AT1G13620.1">
    <property type="protein sequence ID" value="AT1G13620.1"/>
    <property type="gene ID" value="AT1G13620"/>
</dbReference>
<dbReference type="GeneID" id="837923"/>
<dbReference type="Gramene" id="AT1G13620.1">
    <property type="protein sequence ID" value="AT1G13620.1"/>
    <property type="gene ID" value="AT1G13620"/>
</dbReference>
<dbReference type="KEGG" id="ath:AT1G13620"/>
<dbReference type="Araport" id="AT1G13620"/>
<dbReference type="TAIR" id="AT1G13620">
    <property type="gene designation" value="RGF2"/>
</dbReference>
<dbReference type="HOGENOM" id="CLU_175812_0_0_1"/>
<dbReference type="InParanoid" id="Q6DSU1"/>
<dbReference type="OMA" id="TKMKINP"/>
<dbReference type="OrthoDB" id="994020at2759"/>
<dbReference type="PhylomeDB" id="Q6DSU1"/>
<dbReference type="PRO" id="PR:Q6DSU1"/>
<dbReference type="Proteomes" id="UP000006548">
    <property type="component" value="Chromosome 1"/>
</dbReference>
<dbReference type="ExpressionAtlas" id="Q6DSU1">
    <property type="expression patterns" value="baseline and differential"/>
</dbReference>
<dbReference type="GO" id="GO:0005615">
    <property type="term" value="C:extracellular space"/>
    <property type="evidence" value="ECO:0000250"/>
    <property type="project" value="UniProtKB"/>
</dbReference>
<dbReference type="GO" id="GO:0008083">
    <property type="term" value="F:growth factor activity"/>
    <property type="evidence" value="ECO:0000314"/>
    <property type="project" value="UniProtKB"/>
</dbReference>
<dbReference type="GO" id="GO:0030154">
    <property type="term" value="P:cell differentiation"/>
    <property type="evidence" value="ECO:0000314"/>
    <property type="project" value="UniProtKB"/>
</dbReference>
<dbReference type="GO" id="GO:0016036">
    <property type="term" value="P:cellular response to phosphate starvation"/>
    <property type="evidence" value="ECO:0000315"/>
    <property type="project" value="UniProtKB"/>
</dbReference>
<dbReference type="GO" id="GO:0008284">
    <property type="term" value="P:positive regulation of cell population proliferation"/>
    <property type="evidence" value="ECO:0000314"/>
    <property type="project" value="UniProtKB"/>
</dbReference>
<dbReference type="GO" id="GO:0009786">
    <property type="term" value="P:regulation of asymmetric cell division"/>
    <property type="evidence" value="ECO:0000250"/>
    <property type="project" value="UniProtKB"/>
</dbReference>
<dbReference type="GO" id="GO:2000023">
    <property type="term" value="P:regulation of lateral root development"/>
    <property type="evidence" value="ECO:0000250"/>
    <property type="project" value="UniProtKB"/>
</dbReference>
<dbReference type="GO" id="GO:2000280">
    <property type="term" value="P:regulation of root development"/>
    <property type="evidence" value="ECO:0000315"/>
    <property type="project" value="UniProtKB"/>
</dbReference>
<dbReference type="GO" id="GO:0010082">
    <property type="term" value="P:regulation of root meristem growth"/>
    <property type="evidence" value="ECO:0000316"/>
    <property type="project" value="TAIR"/>
</dbReference>
<dbReference type="GO" id="GO:2000067">
    <property type="term" value="P:regulation of root morphogenesis"/>
    <property type="evidence" value="ECO:0000315"/>
    <property type="project" value="UniProtKB"/>
</dbReference>
<name>GLV5_ARATH</name>
<gene>
    <name evidence="12" type="primary">GLV5</name>
    <name evidence="11" type="synonym">CLEL1</name>
    <name evidence="10" type="synonym">RGF2</name>
    <name evidence="15" type="ordered locus">At1g13620</name>
    <name evidence="16" type="ORF">F21F23.5</name>
</gene>
<evidence type="ECO:0000250" key="1">
    <source>
        <dbReference type="UniProtKB" id="O49519"/>
    </source>
</evidence>
<evidence type="ECO:0000250" key="2">
    <source>
        <dbReference type="UniProtKB" id="Q3E880"/>
    </source>
</evidence>
<evidence type="ECO:0000250" key="3">
    <source>
        <dbReference type="UniProtKB" id="Q93VK8"/>
    </source>
</evidence>
<evidence type="ECO:0000255" key="4"/>
<evidence type="ECO:0000256" key="5">
    <source>
        <dbReference type="SAM" id="MobiDB-lite"/>
    </source>
</evidence>
<evidence type="ECO:0000269" key="6">
    <source>
    </source>
</evidence>
<evidence type="ECO:0000269" key="7">
    <source>
    </source>
</evidence>
<evidence type="ECO:0000269" key="8">
    <source>
    </source>
</evidence>
<evidence type="ECO:0000269" key="9">
    <source>
    </source>
</evidence>
<evidence type="ECO:0000303" key="10">
    <source>
    </source>
</evidence>
<evidence type="ECO:0000303" key="11">
    <source>
    </source>
</evidence>
<evidence type="ECO:0000303" key="12">
    <source>
    </source>
</evidence>
<evidence type="ECO:0000305" key="13"/>
<evidence type="ECO:0000305" key="14">
    <source>
    </source>
</evidence>
<evidence type="ECO:0000312" key="15">
    <source>
        <dbReference type="Araport" id="AT1G13620"/>
    </source>
</evidence>
<evidence type="ECO:0000312" key="16">
    <source>
        <dbReference type="EMBL" id="AAF81288.1"/>
    </source>
</evidence>